<comment type="function">
    <text evidence="1">Pathogen-recognition receptor expressed on the surface of immature dendritic cells (DCs) and involved in initiation of primary immune response. Thought to mediate the endocytosis of pathogens which are subsequently degraded in lysosomal compartments. The receptor returns to the cell membrane surface and the pathogen-derived antigens are presented to resting T-cells via MHC class II proteins to initiate the adaptive immune response. Probably recognizes in a calcium-dependent manner high mannose N-linked oligosaccharides in a variety of pathogen antigens (By similarity).</text>
</comment>
<comment type="function">
    <text evidence="1">On DCs it is a high affinity receptor for ICAM2 and ICAM3 by binding to mannose-like carbohydrates. May act as a DC rolling receptor that mediates transendothelial migration of DC presursors from blood to tissues by binding endothelial ICAM2. Seems to regulate DC-induced T-cell proliferation by binding to ICAM3 on T-cells in the immunological synapse formed between DC and T-cells (By similarity).</text>
</comment>
<comment type="subunit">
    <text evidence="2">Homotetramer. Interacts with C1QBP; the interaction is indicative for a C1q:C1QBP:CD209 signaling complex. Interacts with ICAM2 and ICAM3 by binding to mannose-like carbohydrates. Interacts (via C-type lectin domain) with CEACAM1 (via Lewis X moieties); this interaction is regulated by the glycosylation pattern of CEACAM1 on cell types and regulates contact between dendritic cells and neutrophils.</text>
</comment>
<comment type="subcellular location">
    <subcellularLocation>
        <location evidence="1">Membrane</location>
        <topology evidence="1">Single-pass type II membrane protein</topology>
    </subcellularLocation>
</comment>
<comment type="domain">
    <text evidence="1">The tandem repeat domain, also called neck domain, mediates oligomerization.</text>
</comment>
<dbReference type="EMBL" id="AY078905">
    <property type="protein sequence ID" value="AAL89542.1"/>
    <property type="molecule type" value="Genomic_DNA"/>
</dbReference>
<dbReference type="EMBL" id="AY078899">
    <property type="protein sequence ID" value="AAL89542.1"/>
    <property type="status" value="JOINED"/>
    <property type="molecule type" value="Genomic_DNA"/>
</dbReference>
<dbReference type="EMBL" id="AY078900">
    <property type="protein sequence ID" value="AAL89542.1"/>
    <property type="status" value="JOINED"/>
    <property type="molecule type" value="Genomic_DNA"/>
</dbReference>
<dbReference type="EMBL" id="AY078901">
    <property type="protein sequence ID" value="AAL89542.1"/>
    <property type="status" value="JOINED"/>
    <property type="molecule type" value="Genomic_DNA"/>
</dbReference>
<dbReference type="EMBL" id="AY078902">
    <property type="protein sequence ID" value="AAL89542.1"/>
    <property type="status" value="JOINED"/>
    <property type="molecule type" value="Genomic_DNA"/>
</dbReference>
<dbReference type="EMBL" id="AY078903">
    <property type="protein sequence ID" value="AAL89542.1"/>
    <property type="status" value="JOINED"/>
    <property type="molecule type" value="Genomic_DNA"/>
</dbReference>
<dbReference type="EMBL" id="AY078904">
    <property type="protein sequence ID" value="AAL89542.1"/>
    <property type="status" value="JOINED"/>
    <property type="molecule type" value="Genomic_DNA"/>
</dbReference>
<dbReference type="EMBL" id="AY078898">
    <property type="protein sequence ID" value="AAL89541.1"/>
    <property type="molecule type" value="Genomic_DNA"/>
</dbReference>
<dbReference type="EMBL" id="AY078892">
    <property type="protein sequence ID" value="AAL89541.1"/>
    <property type="status" value="JOINED"/>
    <property type="molecule type" value="Genomic_DNA"/>
</dbReference>
<dbReference type="EMBL" id="AY078893">
    <property type="protein sequence ID" value="AAL89541.1"/>
    <property type="status" value="JOINED"/>
    <property type="molecule type" value="Genomic_DNA"/>
</dbReference>
<dbReference type="EMBL" id="AY078894">
    <property type="protein sequence ID" value="AAL89541.1"/>
    <property type="status" value="JOINED"/>
    <property type="molecule type" value="Genomic_DNA"/>
</dbReference>
<dbReference type="EMBL" id="AY078895">
    <property type="protein sequence ID" value="AAL89541.1"/>
    <property type="status" value="JOINED"/>
    <property type="molecule type" value="Genomic_DNA"/>
</dbReference>
<dbReference type="EMBL" id="AY078896">
    <property type="protein sequence ID" value="AAL89541.1"/>
    <property type="status" value="JOINED"/>
    <property type="molecule type" value="Genomic_DNA"/>
</dbReference>
<dbReference type="EMBL" id="AY078897">
    <property type="protein sequence ID" value="AAL89541.1"/>
    <property type="status" value="JOINED"/>
    <property type="molecule type" value="Genomic_DNA"/>
</dbReference>
<dbReference type="BMRB" id="Q8HY00"/>
<dbReference type="SMR" id="Q8HY00"/>
<dbReference type="GlyCosmos" id="Q8HY00">
    <property type="glycosylation" value="1 site, No reported glycans"/>
</dbReference>
<dbReference type="GO" id="GO:0016020">
    <property type="term" value="C:membrane"/>
    <property type="evidence" value="ECO:0007669"/>
    <property type="project" value="UniProtKB-SubCell"/>
</dbReference>
<dbReference type="GO" id="GO:0005537">
    <property type="term" value="F:D-mannose binding"/>
    <property type="evidence" value="ECO:0007669"/>
    <property type="project" value="UniProtKB-KW"/>
</dbReference>
<dbReference type="GO" id="GO:0046872">
    <property type="term" value="F:metal ion binding"/>
    <property type="evidence" value="ECO:0007669"/>
    <property type="project" value="UniProtKB-KW"/>
</dbReference>
<dbReference type="GO" id="GO:0002250">
    <property type="term" value="P:adaptive immune response"/>
    <property type="evidence" value="ECO:0007669"/>
    <property type="project" value="UniProtKB-KW"/>
</dbReference>
<dbReference type="GO" id="GO:0007155">
    <property type="term" value="P:cell adhesion"/>
    <property type="evidence" value="ECO:0007669"/>
    <property type="project" value="UniProtKB-KW"/>
</dbReference>
<dbReference type="GO" id="GO:0006897">
    <property type="term" value="P:endocytosis"/>
    <property type="evidence" value="ECO:0007669"/>
    <property type="project" value="UniProtKB-KW"/>
</dbReference>
<dbReference type="GO" id="GO:0045087">
    <property type="term" value="P:innate immune response"/>
    <property type="evidence" value="ECO:0007669"/>
    <property type="project" value="UniProtKB-KW"/>
</dbReference>
<dbReference type="CDD" id="cd03590">
    <property type="entry name" value="CLECT_DC-SIGN_like"/>
    <property type="match status" value="1"/>
</dbReference>
<dbReference type="FunFam" id="3.10.100.10:FF:000044">
    <property type="entry name" value="CD209 antigen, isoform CRA_b"/>
    <property type="match status" value="1"/>
</dbReference>
<dbReference type="Gene3D" id="3.10.100.10">
    <property type="entry name" value="Mannose-Binding Protein A, subunit A"/>
    <property type="match status" value="1"/>
</dbReference>
<dbReference type="InterPro" id="IPR001304">
    <property type="entry name" value="C-type_lectin-like"/>
</dbReference>
<dbReference type="InterPro" id="IPR016186">
    <property type="entry name" value="C-type_lectin-like/link_sf"/>
</dbReference>
<dbReference type="InterPro" id="IPR050111">
    <property type="entry name" value="C-type_lectin/snaclec_domain"/>
</dbReference>
<dbReference type="InterPro" id="IPR018378">
    <property type="entry name" value="C-type_lectin_CS"/>
</dbReference>
<dbReference type="InterPro" id="IPR033989">
    <property type="entry name" value="CD209-like_CTLD"/>
</dbReference>
<dbReference type="InterPro" id="IPR016187">
    <property type="entry name" value="CTDL_fold"/>
</dbReference>
<dbReference type="PANTHER" id="PTHR22803">
    <property type="entry name" value="MANNOSE, PHOSPHOLIPASE, LECTIN RECEPTOR RELATED"/>
    <property type="match status" value="1"/>
</dbReference>
<dbReference type="Pfam" id="PF00059">
    <property type="entry name" value="Lectin_C"/>
    <property type="match status" value="1"/>
</dbReference>
<dbReference type="SMART" id="SM00034">
    <property type="entry name" value="CLECT"/>
    <property type="match status" value="1"/>
</dbReference>
<dbReference type="SUPFAM" id="SSF56436">
    <property type="entry name" value="C-type lectin-like"/>
    <property type="match status" value="1"/>
</dbReference>
<dbReference type="PROSITE" id="PS00615">
    <property type="entry name" value="C_TYPE_LECTIN_1"/>
    <property type="match status" value="1"/>
</dbReference>
<dbReference type="PROSITE" id="PS50041">
    <property type="entry name" value="C_TYPE_LECTIN_2"/>
    <property type="match status" value="1"/>
</dbReference>
<proteinExistence type="inferred from homology"/>
<accession>Q8HY00</accession>
<accession>Q8HXZ9</accession>
<sequence>MSDSKEPRLQQLGLLEEEQLRGLGFRQTRGYKSLAGCLGHGVLVLQLLSFTLLAGLFVQVSKVPSSISQEQSRQDSIYQNLTQLKAAVGELSEKSKLQEIYQELTQLKAAVSELPEKSKQQEIYQELTQLKAAVSELPEKSKLQEIYQELTQLKAAVSELPEKSKLQEIYQELTRLKAAVGELPEKCKLQEIYQELTRLKAAVDELPEKSKLQEIYQELTQLKAAVGELPEKSRLQEIYQELTQLKAAVERLCHPCPWEWTFFQGNCYFISNSQRNWHDSITACQEVGAQLVVIKSAEEQNFLQLQSSRSNRFTWMGLSDLNQEGTWQWVDGSPLLPSFKQYWNRGEPNNVGEEDCAEFSGNGWNDDKCNLAKFWICKKSAASCSRDEEQFLSPAPATPNPPPA</sequence>
<feature type="chain" id="PRO_0000046603" description="CD209 antigen">
    <location>
        <begin position="1"/>
        <end position="404"/>
    </location>
</feature>
<feature type="topological domain" description="Cytoplasmic" evidence="3">
    <location>
        <begin position="1"/>
        <end position="37"/>
    </location>
</feature>
<feature type="transmembrane region" description="Helical; Signal-anchor for type II membrane protein" evidence="3">
    <location>
        <begin position="38"/>
        <end position="58"/>
    </location>
</feature>
<feature type="topological domain" description="Extracellular" evidence="3">
    <location>
        <begin position="59"/>
        <end position="404"/>
    </location>
</feature>
<feature type="repeat" description="1">
    <location>
        <begin position="96"/>
        <end position="118"/>
    </location>
</feature>
<feature type="repeat" description="2">
    <location>
        <begin position="119"/>
        <end position="141"/>
    </location>
</feature>
<feature type="repeat" description="3">
    <location>
        <begin position="142"/>
        <end position="164"/>
    </location>
</feature>
<feature type="repeat" description="4">
    <location>
        <begin position="165"/>
        <end position="187"/>
    </location>
</feature>
<feature type="repeat" description="5">
    <location>
        <begin position="188"/>
        <end position="210"/>
    </location>
</feature>
<feature type="repeat" description="6">
    <location>
        <begin position="211"/>
        <end position="233"/>
    </location>
</feature>
<feature type="repeat" description="7">
    <location>
        <begin position="234"/>
        <end position="257"/>
    </location>
</feature>
<feature type="domain" description="C-type lectin" evidence="4">
    <location>
        <begin position="263"/>
        <end position="378"/>
    </location>
</feature>
<feature type="region of interest" description="7 X approximate tandem repeats">
    <location>
        <begin position="96"/>
        <end position="257"/>
    </location>
</feature>
<feature type="short sequence motif" description="Endocytosis signal" evidence="1">
    <location>
        <begin position="14"/>
        <end position="15"/>
    </location>
</feature>
<feature type="short sequence motif" description="Endocytosis signal" evidence="3">
    <location>
        <begin position="16"/>
        <end position="18"/>
    </location>
</feature>
<feature type="short sequence motif" description="Endocytosis signal" evidence="3">
    <location>
        <begin position="31"/>
        <end position="34"/>
    </location>
</feature>
<feature type="binding site" evidence="1">
    <location>
        <position position="347"/>
    </location>
    <ligand>
        <name>Ca(2+)</name>
        <dbReference type="ChEBI" id="CHEBI:29108"/>
    </ligand>
</feature>
<feature type="binding site" evidence="1">
    <location>
        <position position="349"/>
    </location>
    <ligand>
        <name>Ca(2+)</name>
        <dbReference type="ChEBI" id="CHEBI:29108"/>
    </ligand>
</feature>
<feature type="binding site" evidence="1">
    <location>
        <position position="351"/>
    </location>
    <ligand>
        <name>Ca(2+)</name>
        <dbReference type="ChEBI" id="CHEBI:29108"/>
    </ligand>
</feature>
<feature type="binding site" evidence="1">
    <location>
        <position position="354"/>
    </location>
    <ligand>
        <name>Ca(2+)</name>
        <dbReference type="ChEBI" id="CHEBI:29108"/>
    </ligand>
</feature>
<feature type="binding site" evidence="1">
    <location>
        <position position="365"/>
    </location>
    <ligand>
        <name>Ca(2+)</name>
        <dbReference type="ChEBI" id="CHEBI:29108"/>
    </ligand>
</feature>
<feature type="binding site" evidence="1">
    <location>
        <position position="366"/>
    </location>
    <ligand>
        <name>Ca(2+)</name>
        <dbReference type="ChEBI" id="CHEBI:29108"/>
    </ligand>
</feature>
<feature type="glycosylation site" description="N-linked (GlcNAc...) asparagine" evidence="3">
    <location>
        <position position="80"/>
    </location>
</feature>
<feature type="disulfide bond" evidence="4">
    <location>
        <begin position="256"/>
        <end position="267"/>
    </location>
</feature>
<feature type="disulfide bond" evidence="4">
    <location>
        <begin position="284"/>
        <end position="377"/>
    </location>
</feature>
<feature type="disulfide bond" evidence="4">
    <location>
        <begin position="356"/>
        <end position="369"/>
    </location>
</feature>
<feature type="sequence conflict" description="In Ref. 1; AAL89542." evidence="5" ref="1">
    <original>G</original>
    <variation>D</variation>
    <location>
        <position position="181"/>
    </location>
</feature>
<feature type="sequence conflict" description="In Ref. 1; AAL89542." evidence="5" ref="1">
    <original>C</original>
    <variation>S</variation>
    <location>
        <position position="187"/>
    </location>
</feature>
<gene>
    <name type="primary">CD209</name>
</gene>
<keyword id="KW-1064">Adaptive immunity</keyword>
<keyword id="KW-0106">Calcium</keyword>
<keyword id="KW-0130">Cell adhesion</keyword>
<keyword id="KW-1015">Disulfide bond</keyword>
<keyword id="KW-0254">Endocytosis</keyword>
<keyword id="KW-0325">Glycoprotein</keyword>
<keyword id="KW-0391">Immunity</keyword>
<keyword id="KW-0399">Innate immunity</keyword>
<keyword id="KW-0430">Lectin</keyword>
<keyword id="KW-0465">Mannose-binding</keyword>
<keyword id="KW-0472">Membrane</keyword>
<keyword id="KW-0479">Metal-binding</keyword>
<keyword id="KW-0675">Receptor</keyword>
<keyword id="KW-0677">Repeat</keyword>
<keyword id="KW-0735">Signal-anchor</keyword>
<keyword id="KW-0812">Transmembrane</keyword>
<keyword id="KW-1133">Transmembrane helix</keyword>
<protein>
    <recommendedName>
        <fullName>CD209 antigen</fullName>
    </recommendedName>
    <alternativeName>
        <fullName>Dendritic cell-specific ICAM-3-grabbing non-integrin 1</fullName>
        <shortName>DC-SIGN1</shortName>
    </alternativeName>
    <cdAntigenName>CD209</cdAntigenName>
</protein>
<name>CD209_PONPY</name>
<organism>
    <name type="scientific">Pongo pygmaeus</name>
    <name type="common">Bornean orangutan</name>
    <dbReference type="NCBI Taxonomy" id="9600"/>
    <lineage>
        <taxon>Eukaryota</taxon>
        <taxon>Metazoa</taxon>
        <taxon>Chordata</taxon>
        <taxon>Craniata</taxon>
        <taxon>Vertebrata</taxon>
        <taxon>Euteleostomi</taxon>
        <taxon>Mammalia</taxon>
        <taxon>Eutheria</taxon>
        <taxon>Euarchontoglires</taxon>
        <taxon>Primates</taxon>
        <taxon>Haplorrhini</taxon>
        <taxon>Catarrhini</taxon>
        <taxon>Hominidae</taxon>
        <taxon>Pongo</taxon>
    </lineage>
</organism>
<reference key="1">
    <citation type="journal article" date="2003" name="J. Virol.">
        <title>Novel member of the CD209 (DC-SIGN) gene family in primates.</title>
        <authorList>
            <person name="Bashirova A.A."/>
            <person name="Wu L."/>
            <person name="Cheng J."/>
            <person name="Martin T.D."/>
            <person name="Martin M.P."/>
            <person name="Benveniste R.E."/>
            <person name="Lifson J.D."/>
            <person name="Kewalramani V.N."/>
            <person name="Hughes A."/>
            <person name="Carrington M."/>
        </authorList>
    </citation>
    <scope>NUCLEOTIDE SEQUENCE [GENOMIC DNA]</scope>
    <source>
        <strain>Isolate Ppy21</strain>
    </source>
</reference>
<evidence type="ECO:0000250" key="1"/>
<evidence type="ECO:0000250" key="2">
    <source>
        <dbReference type="UniProtKB" id="Q9NNX6"/>
    </source>
</evidence>
<evidence type="ECO:0000255" key="3"/>
<evidence type="ECO:0000255" key="4">
    <source>
        <dbReference type="PROSITE-ProRule" id="PRU00040"/>
    </source>
</evidence>
<evidence type="ECO:0000305" key="5"/>